<keyword id="KW-0535">Nitrogen fixation</keyword>
<keyword id="KW-1185">Reference proteome</keyword>
<organism>
    <name type="scientific">Methanococcus maripaludis (strain DSM 14266 / JCM 13030 / NBRC 101832 / S2 / LL)</name>
    <dbReference type="NCBI Taxonomy" id="267377"/>
    <lineage>
        <taxon>Archaea</taxon>
        <taxon>Methanobacteriati</taxon>
        <taxon>Methanobacteriota</taxon>
        <taxon>Methanomada group</taxon>
        <taxon>Methanococci</taxon>
        <taxon>Methanococcales</taxon>
        <taxon>Methanococcaceae</taxon>
        <taxon>Methanococcus</taxon>
    </lineage>
</organism>
<name>NIFE_METMP</name>
<evidence type="ECO:0000250" key="1"/>
<evidence type="ECO:0000305" key="2"/>
<reference key="1">
    <citation type="journal article" date="2004" name="J. Bacteriol.">
        <title>Complete genome sequence of the genetically tractable hydrogenotrophic methanogen Methanococcus maripaludis.</title>
        <authorList>
            <person name="Hendrickson E.L."/>
            <person name="Kaul R."/>
            <person name="Zhou Y."/>
            <person name="Bovee D."/>
            <person name="Chapman P."/>
            <person name="Chung J."/>
            <person name="Conway de Macario E."/>
            <person name="Dodsworth J.A."/>
            <person name="Gillett W."/>
            <person name="Graham D.E."/>
            <person name="Hackett M."/>
            <person name="Haydock A.K."/>
            <person name="Kang A."/>
            <person name="Land M.L."/>
            <person name="Levy R."/>
            <person name="Lie T.J."/>
            <person name="Major T.A."/>
            <person name="Moore B.C."/>
            <person name="Porat I."/>
            <person name="Palmeiri A."/>
            <person name="Rouse G."/>
            <person name="Saenphimmachak C."/>
            <person name="Soell D."/>
            <person name="Van Dien S."/>
            <person name="Wang T."/>
            <person name="Whitman W.B."/>
            <person name="Xia Q."/>
            <person name="Zhang Y."/>
            <person name="Larimer F.W."/>
            <person name="Olson M.V."/>
            <person name="Leigh J.A."/>
        </authorList>
    </citation>
    <scope>NUCLEOTIDE SEQUENCE [LARGE SCALE GENOMIC DNA]</scope>
    <source>
        <strain>DSM 14266 / JCM 13030 / NBRC 101832 / S2 / LL</strain>
    </source>
</reference>
<protein>
    <recommendedName>
        <fullName>Nitrogenase iron-molybdenum cofactor biosynthesis protein NifE</fullName>
    </recommendedName>
</protein>
<feature type="chain" id="PRO_0000408204" description="Nitrogenase iron-molybdenum cofactor biosynthesis protein NifE">
    <location>
        <begin position="1"/>
        <end position="480"/>
    </location>
</feature>
<gene>
    <name type="primary">nifE</name>
    <name type="ordered locus">MMP0858</name>
</gene>
<sequence>MVLNLDTENRKMQDGNNDDDFDLEVKIPNSIFEKLKSIEALKARESQMCVSGKDDSIPTCDKNSTPGMITQRSCVYGGARVVLMPITDAVHLVHGPIGCAACTWDIRGSKSTGDKLYKNGFSTDLQEKDIVFGGEKKLYESILEVNKLYHPGAIFVYSTCVVGLIGDDLKAVCRQAQEATGCRVIPVQSEGFKSFNKTAGHKLACDAMLDYVIGTEEPEEEHPYSINIIGEFNVAGDLWGIIPLYEKMGVKVHTAITGDSTVAKVASAHRSKLNIVQCQKSSNYLAAQMEKKYGIPSIKVNFFGLDETTKSLRAVAEFFGDEEMIKRTEELIKSEIKNLRDEISEYKKDLSGRTVAIYSGAHKSWALVSAFGELDMEIIMSGTQNGKPEDYQQIRDHVCEGTLIVDDASSMELVQLLKEYKPDILISGAKEKYLSLKSGIPHCDFNHDRITAFSGYQGFINFARVVHTAVMTPIWRLSRK</sequence>
<proteinExistence type="inferred from homology"/>
<accession>P0CW55</accession>
<accession>P71528</accession>
<dbReference type="EMBL" id="BX950229">
    <property type="protein sequence ID" value="CAF30414.1"/>
    <property type="molecule type" value="Genomic_DNA"/>
</dbReference>
<dbReference type="RefSeq" id="WP_011170802.1">
    <property type="nucleotide sequence ID" value="NC_005791.1"/>
</dbReference>
<dbReference type="SMR" id="P0CW55"/>
<dbReference type="STRING" id="267377.MMP0858"/>
<dbReference type="EnsemblBacteria" id="CAF30414">
    <property type="protein sequence ID" value="CAF30414"/>
    <property type="gene ID" value="MMP0858"/>
</dbReference>
<dbReference type="GeneID" id="2762315"/>
<dbReference type="KEGG" id="mmp:MMP0858"/>
<dbReference type="PATRIC" id="fig|267377.15.peg.883"/>
<dbReference type="eggNOG" id="arCOG00598">
    <property type="taxonomic scope" value="Archaea"/>
</dbReference>
<dbReference type="HOGENOM" id="CLU_025876_1_1_2"/>
<dbReference type="OrthoDB" id="72973at2157"/>
<dbReference type="UniPathway" id="UPA00782"/>
<dbReference type="Proteomes" id="UP000000590">
    <property type="component" value="Chromosome"/>
</dbReference>
<dbReference type="GO" id="GO:0016163">
    <property type="term" value="F:nitrogenase activity"/>
    <property type="evidence" value="ECO:0007669"/>
    <property type="project" value="InterPro"/>
</dbReference>
<dbReference type="GO" id="GO:0009399">
    <property type="term" value="P:nitrogen fixation"/>
    <property type="evidence" value="ECO:0007669"/>
    <property type="project" value="UniProtKB-KW"/>
</dbReference>
<dbReference type="GO" id="GO:0065003">
    <property type="term" value="P:protein-containing complex assembly"/>
    <property type="evidence" value="ECO:0007669"/>
    <property type="project" value="InterPro"/>
</dbReference>
<dbReference type="CDD" id="cd01968">
    <property type="entry name" value="Nitrogenase_NifE_I"/>
    <property type="match status" value="1"/>
</dbReference>
<dbReference type="Gene3D" id="3.40.50.12380">
    <property type="entry name" value="Nitrogenase MoFe cofactor biosynthesis protein NifE, C-terminal"/>
    <property type="match status" value="1"/>
</dbReference>
<dbReference type="Gene3D" id="3.40.50.1980">
    <property type="entry name" value="Nitrogenase molybdenum iron protein domain"/>
    <property type="match status" value="1"/>
</dbReference>
<dbReference type="InterPro" id="IPR000510">
    <property type="entry name" value="Nase/OxRdtase_comp1"/>
</dbReference>
<dbReference type="InterPro" id="IPR000318">
    <property type="entry name" value="Nase_comp1_CS"/>
</dbReference>
<dbReference type="InterPro" id="IPR005973">
    <property type="entry name" value="NifE"/>
</dbReference>
<dbReference type="InterPro" id="IPR049939">
    <property type="entry name" value="NifE-like"/>
</dbReference>
<dbReference type="NCBIfam" id="TIGR01283">
    <property type="entry name" value="nifE"/>
    <property type="match status" value="1"/>
</dbReference>
<dbReference type="PANTHER" id="PTHR42956">
    <property type="entry name" value="NITROGENASE IRON-MOLYBDENUM COFACTOR BIOSYNTHESIS PROTEIN NIFE"/>
    <property type="match status" value="1"/>
</dbReference>
<dbReference type="PANTHER" id="PTHR42956:SF1">
    <property type="entry name" value="NITROGENASE IRON-MOLYBDENUM COFACTOR BIOSYNTHESIS PROTEIN NIFE"/>
    <property type="match status" value="1"/>
</dbReference>
<dbReference type="Pfam" id="PF00148">
    <property type="entry name" value="Oxidored_nitro"/>
    <property type="match status" value="1"/>
</dbReference>
<dbReference type="SUPFAM" id="SSF53807">
    <property type="entry name" value="Helical backbone' metal receptor"/>
    <property type="match status" value="1"/>
</dbReference>
<dbReference type="PROSITE" id="PS00699">
    <property type="entry name" value="NITROGENASE_1_1"/>
    <property type="match status" value="1"/>
</dbReference>
<dbReference type="PROSITE" id="PS00090">
    <property type="entry name" value="NITROGENASE_1_2"/>
    <property type="match status" value="1"/>
</dbReference>
<comment type="function">
    <text evidence="1">This protein may play a role in the biosynthesis of the prosthetic group of nitrogenase (FeMo cofactor).</text>
</comment>
<comment type="pathway">
    <text>Cofactor biosynthesis; Fe-Mo cofactor biosynthesis.</text>
</comment>
<comment type="similarity">
    <text evidence="2">Belongs to the NifD/NifK/NifE/NifN family.</text>
</comment>